<organism>
    <name type="scientific">Myxococcus xanthus (strain DK1622)</name>
    <dbReference type="NCBI Taxonomy" id="246197"/>
    <lineage>
        <taxon>Bacteria</taxon>
        <taxon>Pseudomonadati</taxon>
        <taxon>Myxococcota</taxon>
        <taxon>Myxococcia</taxon>
        <taxon>Myxococcales</taxon>
        <taxon>Cystobacterineae</taxon>
        <taxon>Myxococcaceae</taxon>
        <taxon>Myxococcus</taxon>
    </lineage>
</organism>
<reference key="1">
    <citation type="journal article" date="2006" name="Proc. Natl. Acad. Sci. U.S.A.">
        <title>Evolution of sensory complexity recorded in a myxobacterial genome.</title>
        <authorList>
            <person name="Goldman B.S."/>
            <person name="Nierman W.C."/>
            <person name="Kaiser D."/>
            <person name="Slater S.C."/>
            <person name="Durkin A.S."/>
            <person name="Eisen J.A."/>
            <person name="Ronning C.M."/>
            <person name="Barbazuk W.B."/>
            <person name="Blanchard M."/>
            <person name="Field C."/>
            <person name="Halling C."/>
            <person name="Hinkle G."/>
            <person name="Iartchuk O."/>
            <person name="Kim H.S."/>
            <person name="Mackenzie C."/>
            <person name="Madupu R."/>
            <person name="Miller N."/>
            <person name="Shvartsbeyn A."/>
            <person name="Sullivan S.A."/>
            <person name="Vaudin M."/>
            <person name="Wiegand R."/>
            <person name="Kaplan H.B."/>
        </authorList>
    </citation>
    <scope>NUCLEOTIDE SEQUENCE [LARGE SCALE GENOMIC DNA]</scope>
    <source>
        <strain>DK1622</strain>
    </source>
</reference>
<proteinExistence type="inferred from homology"/>
<gene>
    <name evidence="1" type="primary">trpD</name>
    <name type="ordered locus">MXAN_6062</name>
</gene>
<name>TRPD_MYXXD</name>
<accession>Q1CZH6</accession>
<protein>
    <recommendedName>
        <fullName evidence="1">Anthranilate phosphoribosyltransferase</fullName>
        <ecNumber evidence="1">2.4.2.18</ecNumber>
    </recommendedName>
</protein>
<evidence type="ECO:0000255" key="1">
    <source>
        <dbReference type="HAMAP-Rule" id="MF_00211"/>
    </source>
</evidence>
<dbReference type="EC" id="2.4.2.18" evidence="1"/>
<dbReference type="EMBL" id="CP000113">
    <property type="protein sequence ID" value="ABF88603.1"/>
    <property type="molecule type" value="Genomic_DNA"/>
</dbReference>
<dbReference type="RefSeq" id="WP_011556011.1">
    <property type="nucleotide sequence ID" value="NC_008095.1"/>
</dbReference>
<dbReference type="SMR" id="Q1CZH6"/>
<dbReference type="STRING" id="246197.MXAN_6062"/>
<dbReference type="EnsemblBacteria" id="ABF88603">
    <property type="protein sequence ID" value="ABF88603"/>
    <property type="gene ID" value="MXAN_6062"/>
</dbReference>
<dbReference type="GeneID" id="41363298"/>
<dbReference type="KEGG" id="mxa:MXAN_6062"/>
<dbReference type="eggNOG" id="COG0547">
    <property type="taxonomic scope" value="Bacteria"/>
</dbReference>
<dbReference type="HOGENOM" id="CLU_034315_2_1_7"/>
<dbReference type="OrthoDB" id="9806430at2"/>
<dbReference type="UniPathway" id="UPA00035">
    <property type="reaction ID" value="UER00041"/>
</dbReference>
<dbReference type="Proteomes" id="UP000002402">
    <property type="component" value="Chromosome"/>
</dbReference>
<dbReference type="GO" id="GO:0005829">
    <property type="term" value="C:cytosol"/>
    <property type="evidence" value="ECO:0007669"/>
    <property type="project" value="TreeGrafter"/>
</dbReference>
<dbReference type="GO" id="GO:0004048">
    <property type="term" value="F:anthranilate phosphoribosyltransferase activity"/>
    <property type="evidence" value="ECO:0007669"/>
    <property type="project" value="UniProtKB-UniRule"/>
</dbReference>
<dbReference type="GO" id="GO:0000287">
    <property type="term" value="F:magnesium ion binding"/>
    <property type="evidence" value="ECO:0007669"/>
    <property type="project" value="UniProtKB-UniRule"/>
</dbReference>
<dbReference type="GO" id="GO:0000162">
    <property type="term" value="P:L-tryptophan biosynthetic process"/>
    <property type="evidence" value="ECO:0007669"/>
    <property type="project" value="UniProtKB-UniRule"/>
</dbReference>
<dbReference type="FunFam" id="3.40.1030.10:FF:000002">
    <property type="entry name" value="Anthranilate phosphoribosyltransferase"/>
    <property type="match status" value="1"/>
</dbReference>
<dbReference type="Gene3D" id="3.40.1030.10">
    <property type="entry name" value="Nucleoside phosphorylase/phosphoribosyltransferase catalytic domain"/>
    <property type="match status" value="1"/>
</dbReference>
<dbReference type="Gene3D" id="1.20.970.10">
    <property type="entry name" value="Transferase, Pyrimidine Nucleoside Phosphorylase, Chain C"/>
    <property type="match status" value="1"/>
</dbReference>
<dbReference type="HAMAP" id="MF_00211">
    <property type="entry name" value="TrpD"/>
    <property type="match status" value="1"/>
</dbReference>
<dbReference type="InterPro" id="IPR005940">
    <property type="entry name" value="Anthranilate_Pribosyl_Tfrase"/>
</dbReference>
<dbReference type="InterPro" id="IPR000312">
    <property type="entry name" value="Glycosyl_Trfase_fam3"/>
</dbReference>
<dbReference type="InterPro" id="IPR017459">
    <property type="entry name" value="Glycosyl_Trfase_fam3_N_dom"/>
</dbReference>
<dbReference type="InterPro" id="IPR036320">
    <property type="entry name" value="Glycosyl_Trfase_fam3_N_dom_sf"/>
</dbReference>
<dbReference type="InterPro" id="IPR035902">
    <property type="entry name" value="Nuc_phospho_transferase"/>
</dbReference>
<dbReference type="NCBIfam" id="TIGR01245">
    <property type="entry name" value="trpD"/>
    <property type="match status" value="1"/>
</dbReference>
<dbReference type="PANTHER" id="PTHR43285">
    <property type="entry name" value="ANTHRANILATE PHOSPHORIBOSYLTRANSFERASE"/>
    <property type="match status" value="1"/>
</dbReference>
<dbReference type="PANTHER" id="PTHR43285:SF2">
    <property type="entry name" value="ANTHRANILATE PHOSPHORIBOSYLTRANSFERASE"/>
    <property type="match status" value="1"/>
</dbReference>
<dbReference type="Pfam" id="PF02885">
    <property type="entry name" value="Glycos_trans_3N"/>
    <property type="match status" value="1"/>
</dbReference>
<dbReference type="Pfam" id="PF00591">
    <property type="entry name" value="Glycos_transf_3"/>
    <property type="match status" value="1"/>
</dbReference>
<dbReference type="SUPFAM" id="SSF52418">
    <property type="entry name" value="Nucleoside phosphorylase/phosphoribosyltransferase catalytic domain"/>
    <property type="match status" value="1"/>
</dbReference>
<dbReference type="SUPFAM" id="SSF47648">
    <property type="entry name" value="Nucleoside phosphorylase/phosphoribosyltransferase N-terminal domain"/>
    <property type="match status" value="1"/>
</dbReference>
<feature type="chain" id="PRO_0000325442" description="Anthranilate phosphoribosyltransferase">
    <location>
        <begin position="1"/>
        <end position="338"/>
    </location>
</feature>
<feature type="binding site" evidence="1">
    <location>
        <position position="81"/>
    </location>
    <ligand>
        <name>5-phospho-alpha-D-ribose 1-diphosphate</name>
        <dbReference type="ChEBI" id="CHEBI:58017"/>
    </ligand>
</feature>
<feature type="binding site" evidence="1">
    <location>
        <position position="81"/>
    </location>
    <ligand>
        <name>anthranilate</name>
        <dbReference type="ChEBI" id="CHEBI:16567"/>
        <label>1</label>
    </ligand>
</feature>
<feature type="binding site" evidence="1">
    <location>
        <begin position="84"/>
        <end position="85"/>
    </location>
    <ligand>
        <name>5-phospho-alpha-D-ribose 1-diphosphate</name>
        <dbReference type="ChEBI" id="CHEBI:58017"/>
    </ligand>
</feature>
<feature type="binding site" evidence="1">
    <location>
        <position position="89"/>
    </location>
    <ligand>
        <name>5-phospho-alpha-D-ribose 1-diphosphate</name>
        <dbReference type="ChEBI" id="CHEBI:58017"/>
    </ligand>
</feature>
<feature type="binding site" evidence="1">
    <location>
        <begin position="91"/>
        <end position="94"/>
    </location>
    <ligand>
        <name>5-phospho-alpha-D-ribose 1-diphosphate</name>
        <dbReference type="ChEBI" id="CHEBI:58017"/>
    </ligand>
</feature>
<feature type="binding site" evidence="1">
    <location>
        <position position="93"/>
    </location>
    <ligand>
        <name>Mg(2+)</name>
        <dbReference type="ChEBI" id="CHEBI:18420"/>
        <label>1</label>
    </ligand>
</feature>
<feature type="binding site" evidence="1">
    <location>
        <begin position="109"/>
        <end position="117"/>
    </location>
    <ligand>
        <name>5-phospho-alpha-D-ribose 1-diphosphate</name>
        <dbReference type="ChEBI" id="CHEBI:58017"/>
    </ligand>
</feature>
<feature type="binding site" evidence="1">
    <location>
        <position position="112"/>
    </location>
    <ligand>
        <name>anthranilate</name>
        <dbReference type="ChEBI" id="CHEBI:16567"/>
        <label>1</label>
    </ligand>
</feature>
<feature type="binding site" evidence="1">
    <location>
        <position position="121"/>
    </location>
    <ligand>
        <name>5-phospho-alpha-D-ribose 1-diphosphate</name>
        <dbReference type="ChEBI" id="CHEBI:58017"/>
    </ligand>
</feature>
<feature type="binding site" evidence="1">
    <location>
        <position position="167"/>
    </location>
    <ligand>
        <name>anthranilate</name>
        <dbReference type="ChEBI" id="CHEBI:16567"/>
        <label>2</label>
    </ligand>
</feature>
<feature type="binding site" evidence="1">
    <location>
        <position position="226"/>
    </location>
    <ligand>
        <name>Mg(2+)</name>
        <dbReference type="ChEBI" id="CHEBI:18420"/>
        <label>2</label>
    </ligand>
</feature>
<feature type="binding site" evidence="1">
    <location>
        <position position="227"/>
    </location>
    <ligand>
        <name>Mg(2+)</name>
        <dbReference type="ChEBI" id="CHEBI:18420"/>
        <label>1</label>
    </ligand>
</feature>
<feature type="binding site" evidence="1">
    <location>
        <position position="227"/>
    </location>
    <ligand>
        <name>Mg(2+)</name>
        <dbReference type="ChEBI" id="CHEBI:18420"/>
        <label>2</label>
    </ligand>
</feature>
<sequence length="338" mass="35226">MTLKEALGKVVGRRDLTREEMTRIMGLMLAGEASPAQVGALATALKMKGETEDEILGAAEAMRACAAKLSPRADVVLDTCGTGGDGAHTFNISTAVAFVAAGAGVTVAKHGNRAVSSRCGSADVLAALGVSMERPHERVARDIDEHGVGFLFAPSHHGALRHVAQARRDMGFHSVFNLLGPLTNPAGARYQLLGTFDGKRVEQTARVLGRLGSRRAWVVHGHDGLDEISPCSATQVAELREDGTVHTFTVSPQDAGLDVVPREAIAGGDAEENAQRLRALLDGERSGLRTAVLLNAAAALVVVGLAADLRDGVRKAEQAIDSGAARNKLSALIEGGLS</sequence>
<keyword id="KW-0028">Amino-acid biosynthesis</keyword>
<keyword id="KW-0057">Aromatic amino acid biosynthesis</keyword>
<keyword id="KW-0328">Glycosyltransferase</keyword>
<keyword id="KW-0460">Magnesium</keyword>
<keyword id="KW-0479">Metal-binding</keyword>
<keyword id="KW-1185">Reference proteome</keyword>
<keyword id="KW-0808">Transferase</keyword>
<keyword id="KW-0822">Tryptophan biosynthesis</keyword>
<comment type="function">
    <text evidence="1">Catalyzes the transfer of the phosphoribosyl group of 5-phosphorylribose-1-pyrophosphate (PRPP) to anthranilate to yield N-(5'-phosphoribosyl)-anthranilate (PRA).</text>
</comment>
<comment type="catalytic activity">
    <reaction evidence="1">
        <text>N-(5-phospho-beta-D-ribosyl)anthranilate + diphosphate = 5-phospho-alpha-D-ribose 1-diphosphate + anthranilate</text>
        <dbReference type="Rhea" id="RHEA:11768"/>
        <dbReference type="ChEBI" id="CHEBI:16567"/>
        <dbReference type="ChEBI" id="CHEBI:18277"/>
        <dbReference type="ChEBI" id="CHEBI:33019"/>
        <dbReference type="ChEBI" id="CHEBI:58017"/>
        <dbReference type="EC" id="2.4.2.18"/>
    </reaction>
</comment>
<comment type="cofactor">
    <cofactor evidence="1">
        <name>Mg(2+)</name>
        <dbReference type="ChEBI" id="CHEBI:18420"/>
    </cofactor>
    <text evidence="1">Binds 2 magnesium ions per monomer.</text>
</comment>
<comment type="pathway">
    <text evidence="1">Amino-acid biosynthesis; L-tryptophan biosynthesis; L-tryptophan from chorismate: step 2/5.</text>
</comment>
<comment type="subunit">
    <text evidence="1">Homodimer.</text>
</comment>
<comment type="similarity">
    <text evidence="1">Belongs to the anthranilate phosphoribosyltransferase family.</text>
</comment>